<feature type="chain" id="PRO_0000441191" description="Swainsonine transporter swnT">
    <location>
        <begin position="1"/>
        <end position="498"/>
    </location>
</feature>
<feature type="transmembrane region" description="Helical" evidence="2">
    <location>
        <begin position="42"/>
        <end position="64"/>
    </location>
</feature>
<feature type="transmembrane region" description="Helical" evidence="2">
    <location>
        <begin position="79"/>
        <end position="99"/>
    </location>
</feature>
<feature type="transmembrane region" description="Helical" evidence="2">
    <location>
        <begin position="126"/>
        <end position="146"/>
    </location>
</feature>
<feature type="transmembrane region" description="Helical" evidence="2">
    <location>
        <begin position="167"/>
        <end position="187"/>
    </location>
</feature>
<feature type="transmembrane region" description="Helical" evidence="2">
    <location>
        <begin position="193"/>
        <end position="213"/>
    </location>
</feature>
<feature type="transmembrane region" description="Helical" evidence="2">
    <location>
        <begin position="272"/>
        <end position="292"/>
    </location>
</feature>
<feature type="transmembrane region" description="Helical" evidence="2">
    <location>
        <begin position="316"/>
        <end position="336"/>
    </location>
</feature>
<feature type="transmembrane region" description="Helical" evidence="2">
    <location>
        <begin position="370"/>
        <end position="390"/>
    </location>
</feature>
<feature type="transmembrane region" description="Helical" evidence="2">
    <location>
        <begin position="398"/>
        <end position="418"/>
    </location>
</feature>
<feature type="transmembrane region" description="Helical" evidence="2">
    <location>
        <begin position="436"/>
        <end position="456"/>
    </location>
</feature>
<feature type="transmembrane region" description="Helical" evidence="2">
    <location>
        <begin position="469"/>
        <end position="489"/>
    </location>
</feature>
<feature type="region of interest" description="Disordered" evidence="4">
    <location>
        <begin position="1"/>
        <end position="21"/>
    </location>
</feature>
<feature type="compositionally biased region" description="Basic and acidic residues" evidence="4">
    <location>
        <begin position="1"/>
        <end position="10"/>
    </location>
</feature>
<feature type="glycosylation site" description="N-linked (GlcNAc...) asparagine" evidence="3">
    <location>
        <position position="227"/>
    </location>
</feature>
<feature type="glycosylation site" description="N-linked (GlcNAc...) asparagine" evidence="3">
    <location>
        <position position="242"/>
    </location>
</feature>
<proteinExistence type="inferred from homology"/>
<sequence>MSLRNDEQTEKGAVVGKVDSQLSGPGQEEIIQVQTQKPFTTLSAIGIGYGVTNTAVGLLLVLGTGIPMGGSPVIFWGFLAMAAVGLATATTLSELISAIPHPGGQYIWVHKIAPERYRRGLSYATAMISWIAAIAIGASGNLAVPVNAFTIVTLLNPNFVYQRWMGFVVFQLINIVTCFGACFEYFLPKISKALLLVNVLSVSAIIITLFATAKTHTSAKDFFKVVNVSGWPNGVAFLIGLNGSNWCFSCLDVATHLAEEIPSPSTNIPKALIWTIVIAFSSGLLMILAVLVNVGPINTPDYSGLTVLHHITGSKAAAIGLWVPVLFLVFASVWSIQTWQSRLAWSISRESGFPLHRHFSKIFPAPFYTPIWSLIGSAIGTALFGCLYLASELAFNSLIATGILLQYASYSIPTILVLYRGRSKFQHGPFWYPKLGFMANIVMLAWTLVALIFYCFPVYSEVIPSQVNYVSAVLILIAILITSLWFLYAKKHYHVVEI</sequence>
<protein>
    <recommendedName>
        <fullName evidence="6">Swainsonine transporter swnT</fullName>
    </recommendedName>
    <alternativeName>
        <fullName evidence="6">Swainsonine biosynthesis gene cluster protein T</fullName>
    </alternativeName>
</protein>
<organism>
    <name type="scientific">Arthroderma benhamiae (strain ATCC MYA-4681 / CBS 112371)</name>
    <name type="common">Trichophyton mentagrophytes</name>
    <dbReference type="NCBI Taxonomy" id="663331"/>
    <lineage>
        <taxon>Eukaryota</taxon>
        <taxon>Fungi</taxon>
        <taxon>Dikarya</taxon>
        <taxon>Ascomycota</taxon>
        <taxon>Pezizomycotina</taxon>
        <taxon>Eurotiomycetes</taxon>
        <taxon>Eurotiomycetidae</taxon>
        <taxon>Onygenales</taxon>
        <taxon>Arthrodermataceae</taxon>
        <taxon>Trichophyton</taxon>
    </lineage>
</organism>
<keyword id="KW-0325">Glycoprotein</keyword>
<keyword id="KW-0472">Membrane</keyword>
<keyword id="KW-1185">Reference proteome</keyword>
<keyword id="KW-0812">Transmembrane</keyword>
<keyword id="KW-1133">Transmembrane helix</keyword>
<keyword id="KW-0813">Transport</keyword>
<reference key="1">
    <citation type="journal article" date="2011" name="Genome Biol.">
        <title>Comparative and functional genomics provide insights into the pathogenicity of dermatophytic fungi.</title>
        <authorList>
            <person name="Burmester A."/>
            <person name="Shelest E."/>
            <person name="Gloeckner G."/>
            <person name="Heddergott C."/>
            <person name="Schindler S."/>
            <person name="Staib P."/>
            <person name="Heidel A."/>
            <person name="Felder M."/>
            <person name="Petzold A."/>
            <person name="Szafranski K."/>
            <person name="Feuermann M."/>
            <person name="Pedruzzi I."/>
            <person name="Priebe S."/>
            <person name="Groth M."/>
            <person name="Winkler R."/>
            <person name="Li W."/>
            <person name="Kniemeyer O."/>
            <person name="Schroeckh V."/>
            <person name="Hertweck C."/>
            <person name="Hube B."/>
            <person name="White T.C."/>
            <person name="Platzer M."/>
            <person name="Guthke R."/>
            <person name="Heitman J."/>
            <person name="Woestemeyer J."/>
            <person name="Zipfel P.F."/>
            <person name="Monod M."/>
            <person name="Brakhage A.A."/>
        </authorList>
    </citation>
    <scope>NUCLEOTIDE SEQUENCE [LARGE SCALE GENOMIC DNA]</scope>
    <source>
        <strain>ATCC MYA-4681 / CBS 112371</strain>
    </source>
</reference>
<reference key="2">
    <citation type="journal article" date="2017" name="G3 (Bethesda)">
        <title>Swainsonine biosynthesis genes in diverse symbiotic and pathogenic fungi.</title>
        <authorList>
            <person name="Cook D."/>
            <person name="Donzelli B.G."/>
            <person name="Creamer R."/>
            <person name="Baucom D.L."/>
            <person name="Gardner D.R."/>
            <person name="Pan J."/>
            <person name="Moore N."/>
            <person name="Jaromczyk J.W."/>
            <person name="Schardl C.L."/>
        </authorList>
    </citation>
    <scope>IDENTIFICATION</scope>
    <scope>PATHWAY</scope>
</reference>
<gene>
    <name evidence="6" type="primary">swnT</name>
    <name type="ORF">ARB_07840</name>
</gene>
<evidence type="ECO:0000250" key="1">
    <source>
        <dbReference type="UniProtKB" id="E9F8M0"/>
    </source>
</evidence>
<evidence type="ECO:0000255" key="2"/>
<evidence type="ECO:0000255" key="3">
    <source>
        <dbReference type="PROSITE-ProRule" id="PRU00498"/>
    </source>
</evidence>
<evidence type="ECO:0000256" key="4">
    <source>
        <dbReference type="SAM" id="MobiDB-lite"/>
    </source>
</evidence>
<evidence type="ECO:0000269" key="5">
    <source>
    </source>
</evidence>
<evidence type="ECO:0000303" key="6">
    <source>
    </source>
</evidence>
<evidence type="ECO:0000305" key="7"/>
<dbReference type="EMBL" id="ABSU01000010">
    <property type="protein sequence ID" value="EFE33480.1"/>
    <property type="molecule type" value="Genomic_DNA"/>
</dbReference>
<dbReference type="RefSeq" id="XP_003014120.1">
    <property type="nucleotide sequence ID" value="XM_003014074.1"/>
</dbReference>
<dbReference type="SMR" id="D4AU27"/>
<dbReference type="GlyCosmos" id="D4AU27">
    <property type="glycosylation" value="2 sites, No reported glycans"/>
</dbReference>
<dbReference type="GeneID" id="9521537"/>
<dbReference type="KEGG" id="abe:ARB_07840"/>
<dbReference type="eggNOG" id="KOG1289">
    <property type="taxonomic scope" value="Eukaryota"/>
</dbReference>
<dbReference type="HOGENOM" id="CLU_004495_2_4_1"/>
<dbReference type="OMA" id="GPFWYPK"/>
<dbReference type="OrthoDB" id="3257095at2759"/>
<dbReference type="Proteomes" id="UP000008866">
    <property type="component" value="Unassembled WGS sequence"/>
</dbReference>
<dbReference type="GO" id="GO:0016020">
    <property type="term" value="C:membrane"/>
    <property type="evidence" value="ECO:0007669"/>
    <property type="project" value="UniProtKB-SubCell"/>
</dbReference>
<dbReference type="GO" id="GO:0022857">
    <property type="term" value="F:transmembrane transporter activity"/>
    <property type="evidence" value="ECO:0007669"/>
    <property type="project" value="InterPro"/>
</dbReference>
<dbReference type="Gene3D" id="1.20.1740.10">
    <property type="entry name" value="Amino acid/polyamine transporter I"/>
    <property type="match status" value="1"/>
</dbReference>
<dbReference type="InterPro" id="IPR002293">
    <property type="entry name" value="AA/rel_permease1"/>
</dbReference>
<dbReference type="PANTHER" id="PTHR45649">
    <property type="entry name" value="AMINO-ACID PERMEASE BAT1"/>
    <property type="match status" value="1"/>
</dbReference>
<dbReference type="PANTHER" id="PTHR45649:SF7">
    <property type="entry name" value="CHOLINE TRANSPORT PROTEIN"/>
    <property type="match status" value="1"/>
</dbReference>
<dbReference type="Pfam" id="PF13520">
    <property type="entry name" value="AA_permease_2"/>
    <property type="match status" value="1"/>
</dbReference>
<dbReference type="PIRSF" id="PIRSF006060">
    <property type="entry name" value="AA_transporter"/>
    <property type="match status" value="1"/>
</dbReference>
<comment type="function">
    <text evidence="1 5">Transmembrane transporter; part of the gene cluster that mediates the biosynthesis of swainsonine, a cytotoxic fungal alkaloid and a potential cancer therapy drug (PubMed:28381497). Does not mediate the secretion of SW and the exact role of swnT in SW biosynthesis remains to be determined (By similarity).</text>
</comment>
<comment type="subcellular location">
    <subcellularLocation>
        <location evidence="2">Membrane</location>
        <topology evidence="2">Multi-pass membrane protein</topology>
    </subcellularLocation>
</comment>
<comment type="similarity">
    <text evidence="7">Belongs to the amino acid-polyamine-organocation (APC) superfamily. Amino acid/choline transporter (ACT) (TC 2.A.3.4) family.</text>
</comment>
<name>SWNT_ARTBC</name>
<accession>D4AU27</accession>